<keyword id="KW-0025">Alternative splicing</keyword>
<keyword id="KW-0966">Cell projection</keyword>
<keyword id="KW-0968">Cytoplasmic vesicle</keyword>
<keyword id="KW-0472">Membrane</keyword>
<keyword id="KW-0597">Phosphoprotein</keyword>
<keyword id="KW-1185">Reference proteome</keyword>
<keyword id="KW-0770">Synapse</keyword>
<organism>
    <name type="scientific">Bos taurus</name>
    <name type="common">Bovine</name>
    <dbReference type="NCBI Taxonomy" id="9913"/>
    <lineage>
        <taxon>Eukaryota</taxon>
        <taxon>Metazoa</taxon>
        <taxon>Chordata</taxon>
        <taxon>Craniata</taxon>
        <taxon>Vertebrata</taxon>
        <taxon>Euteleostomi</taxon>
        <taxon>Mammalia</taxon>
        <taxon>Eutheria</taxon>
        <taxon>Laurasiatheria</taxon>
        <taxon>Artiodactyla</taxon>
        <taxon>Ruminantia</taxon>
        <taxon>Pecora</taxon>
        <taxon>Bovidae</taxon>
        <taxon>Bovinae</taxon>
        <taxon>Bos</taxon>
    </lineage>
</organism>
<feature type="chain" id="PRO_0000269185" description="Tumor protein p63-regulated gene 1-like protein">
    <location>
        <begin position="1"/>
        <end position="275"/>
    </location>
</feature>
<feature type="domain" description="hSac2" evidence="4">
    <location>
        <begin position="68"/>
        <end position="240"/>
    </location>
</feature>
<feature type="region of interest" description="Disordered" evidence="5">
    <location>
        <begin position="21"/>
        <end position="42"/>
    </location>
</feature>
<feature type="region of interest" description="Important for homomultimer formation and localization to presynaptic regions" evidence="1">
    <location>
        <begin position="61"/>
        <end position="100"/>
    </location>
</feature>
<feature type="region of interest" description="Important for homomultimer formation" evidence="1">
    <location>
        <begin position="189"/>
        <end position="275"/>
    </location>
</feature>
<feature type="compositionally biased region" description="Gly residues" evidence="5">
    <location>
        <begin position="25"/>
        <end position="40"/>
    </location>
</feature>
<feature type="modified residue" description="Phosphoserine" evidence="3">
    <location>
        <position position="10"/>
    </location>
</feature>
<feature type="modified residue" description="Phosphoserine" evidence="1">
    <location>
        <position position="14"/>
    </location>
</feature>
<feature type="modified residue" description="Phosphothreonine" evidence="2">
    <location>
        <position position="43"/>
    </location>
</feature>
<feature type="splice variant" id="VSP_058919" description="In isoform 2.">
    <location>
        <begin position="25"/>
        <end position="70"/>
    </location>
</feature>
<dbReference type="EMBL" id="BT030599">
    <property type="protein sequence ID" value="ABQ13039.1"/>
    <property type="molecule type" value="mRNA"/>
</dbReference>
<dbReference type="EMBL" id="BC109547">
    <property type="protein sequence ID" value="AAI09548.1"/>
    <property type="molecule type" value="mRNA"/>
</dbReference>
<dbReference type="RefSeq" id="NP_001069886.2">
    <molecule id="Q32LJ4-1"/>
    <property type="nucleotide sequence ID" value="NM_001076418.2"/>
</dbReference>
<dbReference type="FunCoup" id="Q32LJ4">
    <property type="interactions" value="688"/>
</dbReference>
<dbReference type="STRING" id="9913.ENSBTAP00000021078"/>
<dbReference type="PaxDb" id="9913-ENSBTAP00000021078"/>
<dbReference type="GeneID" id="616333"/>
<dbReference type="KEGG" id="bta:616333"/>
<dbReference type="CTD" id="127262"/>
<dbReference type="eggNOG" id="ENOG502QTYQ">
    <property type="taxonomic scope" value="Eukaryota"/>
</dbReference>
<dbReference type="InParanoid" id="Q32LJ4"/>
<dbReference type="OrthoDB" id="10012704at2759"/>
<dbReference type="Proteomes" id="UP000009136">
    <property type="component" value="Unplaced"/>
</dbReference>
<dbReference type="GO" id="GO:0044305">
    <property type="term" value="C:calyx of Held"/>
    <property type="evidence" value="ECO:0000250"/>
    <property type="project" value="UniProtKB"/>
</dbReference>
<dbReference type="GO" id="GO:0005737">
    <property type="term" value="C:cytoplasm"/>
    <property type="evidence" value="ECO:0000318"/>
    <property type="project" value="GO_Central"/>
</dbReference>
<dbReference type="GO" id="GO:0048786">
    <property type="term" value="C:presynaptic active zone"/>
    <property type="evidence" value="ECO:0007669"/>
    <property type="project" value="UniProtKB-SubCell"/>
</dbReference>
<dbReference type="GO" id="GO:0008021">
    <property type="term" value="C:synaptic vesicle"/>
    <property type="evidence" value="ECO:0000250"/>
    <property type="project" value="UniProtKB"/>
</dbReference>
<dbReference type="GO" id="GO:0030672">
    <property type="term" value="C:synaptic vesicle membrane"/>
    <property type="evidence" value="ECO:0007669"/>
    <property type="project" value="UniProtKB-SubCell"/>
</dbReference>
<dbReference type="GO" id="GO:0051966">
    <property type="term" value="P:regulation of synaptic transmission, glutamatergic"/>
    <property type="evidence" value="ECO:0000250"/>
    <property type="project" value="UniProtKB"/>
</dbReference>
<dbReference type="InterPro" id="IPR034753">
    <property type="entry name" value="hSac2"/>
</dbReference>
<dbReference type="InterPro" id="IPR022158">
    <property type="entry name" value="Inositol_phosphatase"/>
</dbReference>
<dbReference type="InterPro" id="IPR040242">
    <property type="entry name" value="TPRG1-like"/>
</dbReference>
<dbReference type="PANTHER" id="PTHR31108">
    <property type="entry name" value="TUMOR PROTEIN P63-REGULATED GENE 1-LIKE PROTEIN"/>
    <property type="match status" value="1"/>
</dbReference>
<dbReference type="PANTHER" id="PTHR31108:SF7">
    <property type="entry name" value="TUMOR PROTEIN P63-REGULATED GENE 1-LIKE PROTEIN"/>
    <property type="match status" value="1"/>
</dbReference>
<dbReference type="Pfam" id="PF12456">
    <property type="entry name" value="hSac2"/>
    <property type="match status" value="1"/>
</dbReference>
<dbReference type="PROSITE" id="PS51791">
    <property type="entry name" value="HSAC2"/>
    <property type="match status" value="1"/>
</dbReference>
<accession>Q32LJ4</accession>
<accession>A5D9I0</accession>
<gene>
    <name type="primary">TPRG1L</name>
    <name type="synonym">FAM79A</name>
    <name type="synonym">MOVER</name>
</gene>
<comment type="function">
    <text evidence="1">Presynaptic protein involved in the synaptic transmission tuning. Regulates synaptic release probability by decreasing the calcium sensitivity of release.</text>
</comment>
<comment type="subunit">
    <text evidence="1 3">Forms homomultimers. Multimerization appears to be important for presynaptic targeting. Interacts with BSN.</text>
</comment>
<comment type="subcellular location">
    <subcellularLocation>
        <location evidence="1">Cytoplasmic vesicle</location>
        <location evidence="1">Secretory vesicle</location>
        <location evidence="1">Synaptic vesicle membrane</location>
        <topology evidence="1">Peripheral membrane protein</topology>
    </subcellularLocation>
    <subcellularLocation>
        <location evidence="1">Presynaptic active zone</location>
    </subcellularLocation>
</comment>
<comment type="alternative products">
    <event type="alternative splicing"/>
    <isoform>
        <id>Q32LJ4-1</id>
        <name>1</name>
        <sequence type="displayed"/>
    </isoform>
    <isoform>
        <id>Q32LJ4-2</id>
        <name>2</name>
        <sequence type="described" ref="VSP_058919"/>
    </isoform>
</comment>
<comment type="PTM">
    <text evidence="1">Phosphorylated. Phosphorylation promotes association with synaptic vesicle membranes.</text>
</comment>
<comment type="similarity">
    <text evidence="6">Belongs to the TPRG1 family.</text>
</comment>
<proteinExistence type="evidence at transcript level"/>
<protein>
    <recommendedName>
        <fullName>Tumor protein p63-regulated gene 1-like protein</fullName>
    </recommendedName>
    <alternativeName>
        <fullName>Mossy fiber terminal-associated vertebrate-specific presynaptic protein</fullName>
    </alternativeName>
    <alternativeName>
        <fullName>Protein FAM79A</fullName>
    </alternativeName>
</protein>
<sequence>MLQLRDSVDSAGTSPTALLAAGEEVGPGSGGGGGGGGRPGVGTPLRQTLWPLSVHDPTRRARVKEYFVFRPGTIEQAVEEIRVVVRPVEDGDIQGVWLLTEVDHWNNEKERLVLITDQALLICKYDFISLQCQQVVRVALNAVDTISYGEFQFPPKSLNKREGFGIRIQWDKQSRPSFISRWNPWSTSVPYTTFIEHPMAGVDEKTASLCQLDGFKALLIQAVKKAQKESPLPGQEGGVLVLECPLLIETYVGLMSFINNEAKLGYSMTRGKIGF</sequence>
<reference key="1">
    <citation type="journal article" date="2005" name="BMC Genomics">
        <title>Characterization of 954 bovine full-CDS cDNA sequences.</title>
        <authorList>
            <person name="Harhay G.P."/>
            <person name="Sonstegard T.S."/>
            <person name="Keele J.W."/>
            <person name="Heaton M.P."/>
            <person name="Clawson M.L."/>
            <person name="Snelling W.M."/>
            <person name="Wiedmann R.T."/>
            <person name="Van Tassell C.P."/>
            <person name="Smith T.P.L."/>
        </authorList>
    </citation>
    <scope>NUCLEOTIDE SEQUENCE [LARGE SCALE MRNA] (ISOFORM 1)</scope>
    <source>
        <tissue evidence="8">Abomasum</tissue>
    </source>
</reference>
<reference key="2">
    <citation type="submission" date="2005-11" db="EMBL/GenBank/DDBJ databases">
        <authorList>
            <consortium name="NIH - Mammalian Gene Collection (MGC) project"/>
        </authorList>
    </citation>
    <scope>NUCLEOTIDE SEQUENCE [LARGE SCALE MRNA] (ISOFORM 2)</scope>
    <source>
        <strain>Crossbred X Angus</strain>
        <tissue evidence="7">Liver</tissue>
    </source>
</reference>
<evidence type="ECO:0000250" key="1">
    <source>
        <dbReference type="UniProtKB" id="A8WCF8"/>
    </source>
</evidence>
<evidence type="ECO:0000250" key="2">
    <source>
        <dbReference type="UniProtKB" id="Q5T0D9"/>
    </source>
</evidence>
<evidence type="ECO:0000250" key="3">
    <source>
        <dbReference type="UniProtKB" id="Q9DBS2"/>
    </source>
</evidence>
<evidence type="ECO:0000255" key="4">
    <source>
        <dbReference type="PROSITE-ProRule" id="PRU01127"/>
    </source>
</evidence>
<evidence type="ECO:0000256" key="5">
    <source>
        <dbReference type="SAM" id="MobiDB-lite"/>
    </source>
</evidence>
<evidence type="ECO:0000305" key="6"/>
<evidence type="ECO:0000312" key="7">
    <source>
        <dbReference type="EMBL" id="AAI09548.1"/>
    </source>
</evidence>
<evidence type="ECO:0000312" key="8">
    <source>
        <dbReference type="EMBL" id="ABQ13039.1"/>
    </source>
</evidence>
<name>TPRGL_BOVIN</name>